<protein>
    <recommendedName>
        <fullName evidence="1">Acetylglutamate kinase</fullName>
        <ecNumber evidence="1">2.7.2.8</ecNumber>
    </recommendedName>
    <alternativeName>
        <fullName evidence="1">N-acetyl-L-glutamate 5-phosphotransferase</fullName>
    </alternativeName>
    <alternativeName>
        <fullName evidence="1">NAG kinase</fullName>
        <shortName evidence="1">NAGK</shortName>
    </alternativeName>
</protein>
<sequence>MTDTTINNADKVAPTLVARVLNEALPYIRRFSGKTIVVKFGGNAMVDDALKQSFARDIVLMKLVGFNPVVVHGGGPQIGKLLERIGKHTEFVQGMRVTDAETMDVVEMVLGGLVNKEIVNLINSQGGRAVGLTGKDGGMIRARRLRLSHQDAAEQPPEIIDIGHVGEVEHIDPSVVDMLDHGAFIPVIAPIGVGEDGLSYNINADLVAGKIAEVLEAEKLMLLTNTPGVLSKQGELLTGLNPARVDALIQDGTIAGGMLPKIRCALDAVAGGVNAAHIIDGRVEHACLLELFTDAGVGTLIQRR</sequence>
<evidence type="ECO:0000255" key="1">
    <source>
        <dbReference type="HAMAP-Rule" id="MF_00082"/>
    </source>
</evidence>
<name>ARGB_ALKEH</name>
<accession>Q0ACJ6</accession>
<keyword id="KW-0028">Amino-acid biosynthesis</keyword>
<keyword id="KW-0055">Arginine biosynthesis</keyword>
<keyword id="KW-0067">ATP-binding</keyword>
<keyword id="KW-0963">Cytoplasm</keyword>
<keyword id="KW-0418">Kinase</keyword>
<keyword id="KW-0547">Nucleotide-binding</keyword>
<keyword id="KW-1185">Reference proteome</keyword>
<keyword id="KW-0808">Transferase</keyword>
<organism>
    <name type="scientific">Alkalilimnicola ehrlichii (strain ATCC BAA-1101 / DSM 17681 / MLHE-1)</name>
    <dbReference type="NCBI Taxonomy" id="187272"/>
    <lineage>
        <taxon>Bacteria</taxon>
        <taxon>Pseudomonadati</taxon>
        <taxon>Pseudomonadota</taxon>
        <taxon>Gammaproteobacteria</taxon>
        <taxon>Chromatiales</taxon>
        <taxon>Ectothiorhodospiraceae</taxon>
        <taxon>Alkalilimnicola</taxon>
    </lineage>
</organism>
<feature type="chain" id="PRO_0000264679" description="Acetylglutamate kinase">
    <location>
        <begin position="1"/>
        <end position="304"/>
    </location>
</feature>
<feature type="binding site" evidence="1">
    <location>
        <begin position="74"/>
        <end position="75"/>
    </location>
    <ligand>
        <name>substrate</name>
    </ligand>
</feature>
<feature type="binding site" evidence="1">
    <location>
        <position position="96"/>
    </location>
    <ligand>
        <name>substrate</name>
    </ligand>
</feature>
<feature type="binding site" evidence="1">
    <location>
        <position position="201"/>
    </location>
    <ligand>
        <name>substrate</name>
    </ligand>
</feature>
<feature type="site" description="Transition state stabilizer" evidence="1">
    <location>
        <position position="39"/>
    </location>
</feature>
<feature type="site" description="Transition state stabilizer" evidence="1">
    <location>
        <position position="261"/>
    </location>
</feature>
<reference key="1">
    <citation type="submission" date="2006-08" db="EMBL/GenBank/DDBJ databases">
        <title>Complete sequence of Alkalilimnicola ehrilichei MLHE-1.</title>
        <authorList>
            <person name="Copeland A."/>
            <person name="Lucas S."/>
            <person name="Lapidus A."/>
            <person name="Barry K."/>
            <person name="Detter J.C."/>
            <person name="Glavina del Rio T."/>
            <person name="Hammon N."/>
            <person name="Israni S."/>
            <person name="Dalin E."/>
            <person name="Tice H."/>
            <person name="Pitluck S."/>
            <person name="Sims D."/>
            <person name="Brettin T."/>
            <person name="Bruce D."/>
            <person name="Han C."/>
            <person name="Tapia R."/>
            <person name="Gilna P."/>
            <person name="Schmutz J."/>
            <person name="Larimer F."/>
            <person name="Land M."/>
            <person name="Hauser L."/>
            <person name="Kyrpides N."/>
            <person name="Mikhailova N."/>
            <person name="Oremland R.S."/>
            <person name="Hoeft S.E."/>
            <person name="Switzer-Blum J."/>
            <person name="Kulp T."/>
            <person name="King G."/>
            <person name="Tabita R."/>
            <person name="Witte B."/>
            <person name="Santini J.M."/>
            <person name="Basu P."/>
            <person name="Hollibaugh J.T."/>
            <person name="Xie G."/>
            <person name="Stolz J.F."/>
            <person name="Richardson P."/>
        </authorList>
    </citation>
    <scope>NUCLEOTIDE SEQUENCE [LARGE SCALE GENOMIC DNA]</scope>
    <source>
        <strain>ATCC BAA-1101 / DSM 17681 / MLHE-1</strain>
    </source>
</reference>
<dbReference type="EC" id="2.7.2.8" evidence="1"/>
<dbReference type="EMBL" id="CP000453">
    <property type="protein sequence ID" value="ABI55441.1"/>
    <property type="molecule type" value="Genomic_DNA"/>
</dbReference>
<dbReference type="RefSeq" id="WP_011627837.1">
    <property type="nucleotide sequence ID" value="NC_008340.1"/>
</dbReference>
<dbReference type="SMR" id="Q0ACJ6"/>
<dbReference type="KEGG" id="aeh:Mlg_0084"/>
<dbReference type="eggNOG" id="COG0548">
    <property type="taxonomic scope" value="Bacteria"/>
</dbReference>
<dbReference type="HOGENOM" id="CLU_053680_0_0_6"/>
<dbReference type="OrthoDB" id="9803155at2"/>
<dbReference type="UniPathway" id="UPA00068">
    <property type="reaction ID" value="UER00107"/>
</dbReference>
<dbReference type="Proteomes" id="UP000001962">
    <property type="component" value="Chromosome"/>
</dbReference>
<dbReference type="GO" id="GO:0005737">
    <property type="term" value="C:cytoplasm"/>
    <property type="evidence" value="ECO:0007669"/>
    <property type="project" value="UniProtKB-SubCell"/>
</dbReference>
<dbReference type="GO" id="GO:0003991">
    <property type="term" value="F:acetylglutamate kinase activity"/>
    <property type="evidence" value="ECO:0007669"/>
    <property type="project" value="UniProtKB-UniRule"/>
</dbReference>
<dbReference type="GO" id="GO:0005524">
    <property type="term" value="F:ATP binding"/>
    <property type="evidence" value="ECO:0007669"/>
    <property type="project" value="UniProtKB-UniRule"/>
</dbReference>
<dbReference type="GO" id="GO:0042450">
    <property type="term" value="P:arginine biosynthetic process via ornithine"/>
    <property type="evidence" value="ECO:0007669"/>
    <property type="project" value="UniProtKB-UniRule"/>
</dbReference>
<dbReference type="GO" id="GO:0006526">
    <property type="term" value="P:L-arginine biosynthetic process"/>
    <property type="evidence" value="ECO:0007669"/>
    <property type="project" value="UniProtKB-UniPathway"/>
</dbReference>
<dbReference type="CDD" id="cd04250">
    <property type="entry name" value="AAK_NAGK-C"/>
    <property type="match status" value="1"/>
</dbReference>
<dbReference type="FunFam" id="3.40.1160.10:FF:000004">
    <property type="entry name" value="Acetylglutamate kinase"/>
    <property type="match status" value="1"/>
</dbReference>
<dbReference type="Gene3D" id="3.40.1160.10">
    <property type="entry name" value="Acetylglutamate kinase-like"/>
    <property type="match status" value="1"/>
</dbReference>
<dbReference type="HAMAP" id="MF_00082">
    <property type="entry name" value="ArgB"/>
    <property type="match status" value="1"/>
</dbReference>
<dbReference type="InterPro" id="IPR036393">
    <property type="entry name" value="AceGlu_kinase-like_sf"/>
</dbReference>
<dbReference type="InterPro" id="IPR004662">
    <property type="entry name" value="AcgluKinase_fam"/>
</dbReference>
<dbReference type="InterPro" id="IPR037528">
    <property type="entry name" value="ArgB"/>
</dbReference>
<dbReference type="InterPro" id="IPR001048">
    <property type="entry name" value="Asp/Glu/Uridylate_kinase"/>
</dbReference>
<dbReference type="InterPro" id="IPR001057">
    <property type="entry name" value="Glu/AcGlu_kinase"/>
</dbReference>
<dbReference type="InterPro" id="IPR041727">
    <property type="entry name" value="NAGK-C"/>
</dbReference>
<dbReference type="NCBIfam" id="TIGR00761">
    <property type="entry name" value="argB"/>
    <property type="match status" value="1"/>
</dbReference>
<dbReference type="PANTHER" id="PTHR23342">
    <property type="entry name" value="N-ACETYLGLUTAMATE SYNTHASE"/>
    <property type="match status" value="1"/>
</dbReference>
<dbReference type="PANTHER" id="PTHR23342:SF0">
    <property type="entry name" value="N-ACETYLGLUTAMATE SYNTHASE, MITOCHONDRIAL"/>
    <property type="match status" value="1"/>
</dbReference>
<dbReference type="Pfam" id="PF00696">
    <property type="entry name" value="AA_kinase"/>
    <property type="match status" value="1"/>
</dbReference>
<dbReference type="PIRSF" id="PIRSF000728">
    <property type="entry name" value="NAGK"/>
    <property type="match status" value="1"/>
</dbReference>
<dbReference type="PRINTS" id="PR00474">
    <property type="entry name" value="GLU5KINASE"/>
</dbReference>
<dbReference type="SUPFAM" id="SSF53633">
    <property type="entry name" value="Carbamate kinase-like"/>
    <property type="match status" value="1"/>
</dbReference>
<comment type="function">
    <text evidence="1">Catalyzes the ATP-dependent phosphorylation of N-acetyl-L-glutamate.</text>
</comment>
<comment type="catalytic activity">
    <reaction evidence="1">
        <text>N-acetyl-L-glutamate + ATP = N-acetyl-L-glutamyl 5-phosphate + ADP</text>
        <dbReference type="Rhea" id="RHEA:14629"/>
        <dbReference type="ChEBI" id="CHEBI:30616"/>
        <dbReference type="ChEBI" id="CHEBI:44337"/>
        <dbReference type="ChEBI" id="CHEBI:57936"/>
        <dbReference type="ChEBI" id="CHEBI:456216"/>
        <dbReference type="EC" id="2.7.2.8"/>
    </reaction>
</comment>
<comment type="pathway">
    <text evidence="1">Amino-acid biosynthesis; L-arginine biosynthesis; N(2)-acetyl-L-ornithine from L-glutamate: step 2/4.</text>
</comment>
<comment type="subcellular location">
    <subcellularLocation>
        <location evidence="1">Cytoplasm</location>
    </subcellularLocation>
</comment>
<comment type="similarity">
    <text evidence="1">Belongs to the acetylglutamate kinase family. ArgB subfamily.</text>
</comment>
<proteinExistence type="inferred from homology"/>
<gene>
    <name evidence="1" type="primary">argB</name>
    <name type="ordered locus">Mlg_0084</name>
</gene>